<feature type="chain" id="PRO_0000180233" description="Acyl carrier protein">
    <location>
        <begin position="1"/>
        <end position="81"/>
    </location>
</feature>
<feature type="domain" description="Carrier" evidence="2">
    <location>
        <begin position="4"/>
        <end position="79"/>
    </location>
</feature>
<feature type="modified residue" description="O-(pantetheine 4'-phosphoryl)serine" evidence="2">
    <location>
        <position position="39"/>
    </location>
</feature>
<name>ACP_GUITH</name>
<proteinExistence type="inferred from homology"/>
<sequence>MNEQEIFEKVQTIISEQLGVDKSQVTKDANFANDLGADSLDTVELVMAIEEAFNIEIPDDAAEQISNLQQAVDFISQKVAA</sequence>
<evidence type="ECO:0000255" key="1">
    <source>
        <dbReference type="HAMAP-Rule" id="MF_01217"/>
    </source>
</evidence>
<evidence type="ECO:0000255" key="2">
    <source>
        <dbReference type="PROSITE-ProRule" id="PRU00258"/>
    </source>
</evidence>
<accession>P29189</accession>
<keyword id="KW-0150">Chloroplast</keyword>
<keyword id="KW-0275">Fatty acid biosynthesis</keyword>
<keyword id="KW-0276">Fatty acid metabolism</keyword>
<keyword id="KW-0444">Lipid biosynthesis</keyword>
<keyword id="KW-0443">Lipid metabolism</keyword>
<keyword id="KW-0596">Phosphopantetheine</keyword>
<keyword id="KW-0597">Phosphoprotein</keyword>
<keyword id="KW-0934">Plastid</keyword>
<protein>
    <recommendedName>
        <fullName evidence="1">Acyl carrier protein</fullName>
        <shortName evidence="1">ACP</shortName>
    </recommendedName>
</protein>
<dbReference type="EMBL" id="AF041468">
    <property type="protein sequence ID" value="AAC35700.1"/>
    <property type="molecule type" value="Genomic_DNA"/>
</dbReference>
<dbReference type="RefSeq" id="NP_050766.1">
    <property type="nucleotide sequence ID" value="NC_000926.1"/>
</dbReference>
<dbReference type="SMR" id="P29189"/>
<dbReference type="GeneID" id="857074"/>
<dbReference type="HOGENOM" id="CLU_108696_5_1_1"/>
<dbReference type="OMA" id="TMEASFI"/>
<dbReference type="UniPathway" id="UPA00094"/>
<dbReference type="GO" id="GO:0009507">
    <property type="term" value="C:chloroplast"/>
    <property type="evidence" value="ECO:0007669"/>
    <property type="project" value="UniProtKB-SubCell"/>
</dbReference>
<dbReference type="GO" id="GO:0005829">
    <property type="term" value="C:cytosol"/>
    <property type="evidence" value="ECO:0007669"/>
    <property type="project" value="TreeGrafter"/>
</dbReference>
<dbReference type="GO" id="GO:0016020">
    <property type="term" value="C:membrane"/>
    <property type="evidence" value="ECO:0007669"/>
    <property type="project" value="GOC"/>
</dbReference>
<dbReference type="GO" id="GO:0000035">
    <property type="term" value="F:acyl binding"/>
    <property type="evidence" value="ECO:0007669"/>
    <property type="project" value="TreeGrafter"/>
</dbReference>
<dbReference type="GO" id="GO:0000036">
    <property type="term" value="F:acyl carrier activity"/>
    <property type="evidence" value="ECO:0007669"/>
    <property type="project" value="UniProtKB-UniRule"/>
</dbReference>
<dbReference type="GO" id="GO:0009245">
    <property type="term" value="P:lipid A biosynthetic process"/>
    <property type="evidence" value="ECO:0007669"/>
    <property type="project" value="TreeGrafter"/>
</dbReference>
<dbReference type="FunFam" id="1.10.1200.10:FF:000003">
    <property type="entry name" value="Acyl carrier protein"/>
    <property type="match status" value="1"/>
</dbReference>
<dbReference type="Gene3D" id="1.10.1200.10">
    <property type="entry name" value="ACP-like"/>
    <property type="match status" value="1"/>
</dbReference>
<dbReference type="HAMAP" id="MF_01217">
    <property type="entry name" value="Acyl_carrier"/>
    <property type="match status" value="1"/>
</dbReference>
<dbReference type="InterPro" id="IPR003231">
    <property type="entry name" value="ACP"/>
</dbReference>
<dbReference type="InterPro" id="IPR036736">
    <property type="entry name" value="ACP-like_sf"/>
</dbReference>
<dbReference type="InterPro" id="IPR009081">
    <property type="entry name" value="PP-bd_ACP"/>
</dbReference>
<dbReference type="InterPro" id="IPR006162">
    <property type="entry name" value="Ppantetheine_attach_site"/>
</dbReference>
<dbReference type="NCBIfam" id="TIGR00517">
    <property type="entry name" value="acyl_carrier"/>
    <property type="match status" value="1"/>
</dbReference>
<dbReference type="NCBIfam" id="NF002148">
    <property type="entry name" value="PRK00982.1-2"/>
    <property type="match status" value="1"/>
</dbReference>
<dbReference type="NCBIfam" id="NF002149">
    <property type="entry name" value="PRK00982.1-3"/>
    <property type="match status" value="1"/>
</dbReference>
<dbReference type="NCBIfam" id="NF002150">
    <property type="entry name" value="PRK00982.1-4"/>
    <property type="match status" value="1"/>
</dbReference>
<dbReference type="NCBIfam" id="NF002151">
    <property type="entry name" value="PRK00982.1-5"/>
    <property type="match status" value="1"/>
</dbReference>
<dbReference type="NCBIfam" id="NF009104">
    <property type="entry name" value="PRK12449.1"/>
    <property type="match status" value="1"/>
</dbReference>
<dbReference type="PANTHER" id="PTHR20863">
    <property type="entry name" value="ACYL CARRIER PROTEIN"/>
    <property type="match status" value="1"/>
</dbReference>
<dbReference type="PANTHER" id="PTHR20863:SF76">
    <property type="entry name" value="CARRIER DOMAIN-CONTAINING PROTEIN"/>
    <property type="match status" value="1"/>
</dbReference>
<dbReference type="Pfam" id="PF00550">
    <property type="entry name" value="PP-binding"/>
    <property type="match status" value="1"/>
</dbReference>
<dbReference type="SUPFAM" id="SSF47336">
    <property type="entry name" value="ACP-like"/>
    <property type="match status" value="1"/>
</dbReference>
<dbReference type="PROSITE" id="PS50075">
    <property type="entry name" value="CARRIER"/>
    <property type="match status" value="1"/>
</dbReference>
<dbReference type="PROSITE" id="PS00012">
    <property type="entry name" value="PHOSPHOPANTETHEINE"/>
    <property type="match status" value="1"/>
</dbReference>
<geneLocation type="chloroplast"/>
<gene>
    <name evidence="1" type="primary">acpP</name>
    <name type="synonym">acl1</name>
    <name type="synonym">acpA</name>
</gene>
<organism>
    <name type="scientific">Guillardia theta</name>
    <name type="common">Cryptophyte</name>
    <name type="synonym">Cryptomonas phi</name>
    <dbReference type="NCBI Taxonomy" id="55529"/>
    <lineage>
        <taxon>Eukaryota</taxon>
        <taxon>Cryptophyceae</taxon>
        <taxon>Pyrenomonadales</taxon>
        <taxon>Geminigeraceae</taxon>
        <taxon>Guillardia</taxon>
    </lineage>
</organism>
<comment type="function">
    <text evidence="1">Carrier of the growing fatty acid chain in fatty acid biosynthesis.</text>
</comment>
<comment type="pathway">
    <text evidence="1">Lipid metabolism; fatty acid biosynthesis.</text>
</comment>
<comment type="subcellular location">
    <subcellularLocation>
        <location>Plastid</location>
        <location>Chloroplast</location>
    </subcellularLocation>
</comment>
<comment type="PTM">
    <text evidence="1">4'-phosphopantetheine is transferred from CoA to a specific serine of apo-ACP by AcpS. This modification is essential for activity because fatty acids are bound in thioester linkage to the sulfhydryl of the prosthetic group.</text>
</comment>
<comment type="similarity">
    <text evidence="1">Belongs to the acyl carrier protein (ACP) family.</text>
</comment>
<reference key="1">
    <citation type="journal article" date="1991" name="Proc. Natl. Acad. Sci. U.S.A.">
        <title>The plastid genome of Cryptomonas phi encodes an hsp70-like protein, a histone-like protein, and an acyl carrier protein.</title>
        <authorList>
            <person name="Wang S."/>
            <person name="Liu X.-Q."/>
        </authorList>
    </citation>
    <scope>NUCLEOTIDE SEQUENCE [LARGE SCALE GENOMIC DNA]</scope>
</reference>
<reference key="2">
    <citation type="journal article" date="1999" name="J. Mol. Evol.">
        <title>The plastid genome of the cryptophyte alga, Guillardia theta: complete sequence and conserved synteny groups confirm its common ancestry with red algae.</title>
        <authorList>
            <person name="Douglas S.E."/>
            <person name="Penny S.L."/>
        </authorList>
    </citation>
    <scope>NUCLEOTIDE SEQUENCE [LARGE SCALE GENOMIC DNA]</scope>
</reference>